<evidence type="ECO:0000255" key="1">
    <source>
        <dbReference type="HAMAP-Rule" id="MF_01632"/>
    </source>
</evidence>
<evidence type="ECO:0000305" key="2"/>
<feature type="chain" id="PRO_0000240582" description="Probable chorismate pyruvate-lyase">
    <location>
        <begin position="1"/>
        <end position="179"/>
    </location>
</feature>
<feature type="binding site" evidence="1">
    <location>
        <position position="82"/>
    </location>
    <ligand>
        <name>substrate</name>
    </ligand>
</feature>
<feature type="binding site" evidence="1">
    <location>
        <position position="120"/>
    </location>
    <ligand>
        <name>substrate</name>
    </ligand>
</feature>
<feature type="binding site" evidence="1">
    <location>
        <position position="165"/>
    </location>
    <ligand>
        <name>substrate</name>
    </ligand>
</feature>
<comment type="function">
    <text evidence="1">Removes the pyruvyl group from chorismate, with concomitant aromatization of the ring, to provide 4-hydroxybenzoate (4HB) for the ubiquinone pathway.</text>
</comment>
<comment type="catalytic activity">
    <reaction evidence="1">
        <text>chorismate = 4-hydroxybenzoate + pyruvate</text>
        <dbReference type="Rhea" id="RHEA:16505"/>
        <dbReference type="ChEBI" id="CHEBI:15361"/>
        <dbReference type="ChEBI" id="CHEBI:17879"/>
        <dbReference type="ChEBI" id="CHEBI:29748"/>
        <dbReference type="EC" id="4.1.3.40"/>
    </reaction>
</comment>
<comment type="pathway">
    <text evidence="1">Cofactor biosynthesis; ubiquinone biosynthesis.</text>
</comment>
<comment type="subcellular location">
    <subcellularLocation>
        <location evidence="1">Cytoplasm</location>
    </subcellularLocation>
</comment>
<comment type="similarity">
    <text evidence="1">Belongs to the UbiC family.</text>
</comment>
<comment type="sequence caution" evidence="2">
    <conflict type="erroneous initiation">
        <sequence resource="EMBL-CDS" id="BAC61212"/>
    </conflict>
    <text>Extended N-terminus.</text>
</comment>
<accession>Q87KM8</accession>
<sequence>MNQPTSLYLASLLEVEWQKPEEFEFPNEFAKHWLEEQGSLSRRLKQHCQELTVELLQNHIVTAKTLKSDESQLLSEQDCLLREVVLCGDDCPWVVGRTLIPRTTLVDQQYDLAQQGDIPLGLTVFSADNVERDSLQMGWVHLPQGRFLARRSRLWMNHKPMLVAELFLSNSPIYAKERV</sequence>
<organism>
    <name type="scientific">Vibrio parahaemolyticus serotype O3:K6 (strain RIMD 2210633)</name>
    <dbReference type="NCBI Taxonomy" id="223926"/>
    <lineage>
        <taxon>Bacteria</taxon>
        <taxon>Pseudomonadati</taxon>
        <taxon>Pseudomonadota</taxon>
        <taxon>Gammaproteobacteria</taxon>
        <taxon>Vibrionales</taxon>
        <taxon>Vibrionaceae</taxon>
        <taxon>Vibrio</taxon>
    </lineage>
</organism>
<keyword id="KW-0963">Cytoplasm</keyword>
<keyword id="KW-0456">Lyase</keyword>
<keyword id="KW-0670">Pyruvate</keyword>
<keyword id="KW-0831">Ubiquinone biosynthesis</keyword>
<reference key="1">
    <citation type="journal article" date="2003" name="Lancet">
        <title>Genome sequence of Vibrio parahaemolyticus: a pathogenic mechanism distinct from that of V. cholerae.</title>
        <authorList>
            <person name="Makino K."/>
            <person name="Oshima K."/>
            <person name="Kurokawa K."/>
            <person name="Yokoyama K."/>
            <person name="Uda T."/>
            <person name="Tagomori K."/>
            <person name="Iijima Y."/>
            <person name="Najima M."/>
            <person name="Nakano M."/>
            <person name="Yamashita A."/>
            <person name="Kubota Y."/>
            <person name="Kimura S."/>
            <person name="Yasunaga T."/>
            <person name="Honda T."/>
            <person name="Shinagawa H."/>
            <person name="Hattori M."/>
            <person name="Iida T."/>
        </authorList>
    </citation>
    <scope>NUCLEOTIDE SEQUENCE [LARGE SCALE GENOMIC DNA]</scope>
    <source>
        <strain>RIMD 2210633</strain>
    </source>
</reference>
<dbReference type="EC" id="4.1.3.40" evidence="1"/>
<dbReference type="EMBL" id="BA000031">
    <property type="protein sequence ID" value="BAC61212.1"/>
    <property type="status" value="ALT_INIT"/>
    <property type="molecule type" value="Genomic_DNA"/>
</dbReference>
<dbReference type="RefSeq" id="NP_799328.1">
    <property type="nucleotide sequence ID" value="NC_004603.1"/>
</dbReference>
<dbReference type="SMR" id="Q87KM8"/>
<dbReference type="KEGG" id="vpa:VP2949"/>
<dbReference type="PATRIC" id="fig|223926.6.peg.2838"/>
<dbReference type="eggNOG" id="COG3161">
    <property type="taxonomic scope" value="Bacteria"/>
</dbReference>
<dbReference type="HOGENOM" id="CLU_096824_1_1_6"/>
<dbReference type="UniPathway" id="UPA00232"/>
<dbReference type="Proteomes" id="UP000002493">
    <property type="component" value="Chromosome 1"/>
</dbReference>
<dbReference type="GO" id="GO:0005829">
    <property type="term" value="C:cytosol"/>
    <property type="evidence" value="ECO:0007669"/>
    <property type="project" value="TreeGrafter"/>
</dbReference>
<dbReference type="GO" id="GO:0008813">
    <property type="term" value="F:chorismate lyase activity"/>
    <property type="evidence" value="ECO:0007669"/>
    <property type="project" value="UniProtKB-UniRule"/>
</dbReference>
<dbReference type="GO" id="GO:0042866">
    <property type="term" value="P:pyruvate biosynthetic process"/>
    <property type="evidence" value="ECO:0007669"/>
    <property type="project" value="UniProtKB-UniRule"/>
</dbReference>
<dbReference type="GO" id="GO:0006744">
    <property type="term" value="P:ubiquinone biosynthetic process"/>
    <property type="evidence" value="ECO:0007669"/>
    <property type="project" value="UniProtKB-UniRule"/>
</dbReference>
<dbReference type="Gene3D" id="3.40.1410.10">
    <property type="entry name" value="Chorismate lyase-like"/>
    <property type="match status" value="1"/>
</dbReference>
<dbReference type="HAMAP" id="MF_01632">
    <property type="entry name" value="UbiC"/>
    <property type="match status" value="1"/>
</dbReference>
<dbReference type="InterPro" id="IPR007440">
    <property type="entry name" value="Chorismate--pyruvate_lyase"/>
</dbReference>
<dbReference type="InterPro" id="IPR028978">
    <property type="entry name" value="Chorismate_lyase_/UTRA_dom_sf"/>
</dbReference>
<dbReference type="PANTHER" id="PTHR38683">
    <property type="entry name" value="CHORISMATE PYRUVATE-LYASE"/>
    <property type="match status" value="1"/>
</dbReference>
<dbReference type="PANTHER" id="PTHR38683:SF1">
    <property type="entry name" value="CHORISMATE PYRUVATE-LYASE"/>
    <property type="match status" value="1"/>
</dbReference>
<dbReference type="Pfam" id="PF04345">
    <property type="entry name" value="Chor_lyase"/>
    <property type="match status" value="1"/>
</dbReference>
<dbReference type="SUPFAM" id="SSF64288">
    <property type="entry name" value="Chorismate lyase-like"/>
    <property type="match status" value="1"/>
</dbReference>
<name>UBIC_VIBPA</name>
<proteinExistence type="inferred from homology"/>
<gene>
    <name evidence="1" type="primary">ubiC</name>
    <name type="ordered locus">VP2949</name>
</gene>
<protein>
    <recommendedName>
        <fullName evidence="1">Probable chorismate pyruvate-lyase</fullName>
        <shortName evidence="1">CL</shortName>
        <shortName evidence="1">CPL</shortName>
        <ecNumber evidence="1">4.1.3.40</ecNumber>
    </recommendedName>
</protein>